<dbReference type="EC" id="3.1.21.10"/>
<dbReference type="EMBL" id="AE000657">
    <property type="protein sequence ID" value="AAC07739.1"/>
    <property type="status" value="ALT_INIT"/>
    <property type="molecule type" value="Genomic_DNA"/>
</dbReference>
<dbReference type="PIR" id="B70467">
    <property type="entry name" value="B70467"/>
</dbReference>
<dbReference type="RefSeq" id="NP_214335.1">
    <property type="nucleotide sequence ID" value="NC_000918.1"/>
</dbReference>
<dbReference type="SMR" id="O67766"/>
<dbReference type="FunCoup" id="O67766">
    <property type="interactions" value="21"/>
</dbReference>
<dbReference type="STRING" id="224324.aq_1953"/>
<dbReference type="EnsemblBacteria" id="AAC07739">
    <property type="protein sequence ID" value="AAC07739"/>
    <property type="gene ID" value="aq_1953"/>
</dbReference>
<dbReference type="KEGG" id="aae:aq_1953"/>
<dbReference type="eggNOG" id="COG4570">
    <property type="taxonomic scope" value="Bacteria"/>
</dbReference>
<dbReference type="HOGENOM" id="CLU_139466_1_0_0"/>
<dbReference type="InParanoid" id="O67766"/>
<dbReference type="OrthoDB" id="14362at2"/>
<dbReference type="Proteomes" id="UP000000798">
    <property type="component" value="Chromosome"/>
</dbReference>
<dbReference type="GO" id="GO:0008821">
    <property type="term" value="F:crossover junction DNA endonuclease activity"/>
    <property type="evidence" value="ECO:0007669"/>
    <property type="project" value="InterPro"/>
</dbReference>
<dbReference type="GO" id="GO:0000287">
    <property type="term" value="F:magnesium ion binding"/>
    <property type="evidence" value="ECO:0007669"/>
    <property type="project" value="InterPro"/>
</dbReference>
<dbReference type="GO" id="GO:0006310">
    <property type="term" value="P:DNA recombination"/>
    <property type="evidence" value="ECO:0007669"/>
    <property type="project" value="UniProtKB-KW"/>
</dbReference>
<dbReference type="GO" id="GO:0006281">
    <property type="term" value="P:DNA repair"/>
    <property type="evidence" value="ECO:0007669"/>
    <property type="project" value="UniProtKB-KW"/>
</dbReference>
<dbReference type="Gene3D" id="3.30.1330.70">
    <property type="entry name" value="Holliday junction resolvase RusA"/>
    <property type="match status" value="1"/>
</dbReference>
<dbReference type="InterPro" id="IPR016281">
    <property type="entry name" value="Endonuclease_RusA"/>
</dbReference>
<dbReference type="InterPro" id="IPR008822">
    <property type="entry name" value="Endonuclease_RusA-like"/>
</dbReference>
<dbReference type="InterPro" id="IPR036614">
    <property type="entry name" value="RusA-like_sf"/>
</dbReference>
<dbReference type="Pfam" id="PF05866">
    <property type="entry name" value="RusA"/>
    <property type="match status" value="1"/>
</dbReference>
<dbReference type="PIRSF" id="PIRSF001007">
    <property type="entry name" value="RusA"/>
    <property type="match status" value="1"/>
</dbReference>
<dbReference type="SUPFAM" id="SSF103084">
    <property type="entry name" value="Holliday junction resolvase RusA"/>
    <property type="match status" value="1"/>
</dbReference>
<comment type="function">
    <text evidence="2">Endonuclease that resolves Holliday junction intermediates made during homologous genetic recombination and DNA repair. Exhibits sequence and structure-selective cleavage of four-way DNA junctions, where it introduces symmetrical nicks in two strands of the same polarity at the 5' side of CC dinucleotides.</text>
</comment>
<comment type="catalytic activity">
    <reaction>
        <text>Endonucleolytic cleavage at a junction such as a reciprocal single-stranded crossover between two homologous DNA duplexes (Holliday junction).</text>
        <dbReference type="EC" id="3.1.21.10"/>
    </reaction>
</comment>
<comment type="cofactor">
    <cofactor evidence="1">
        <name>Mg(2+)</name>
        <dbReference type="ChEBI" id="CHEBI:18420"/>
    </cofactor>
    <text evidence="1">Binds 1 Mg(2+) ion per subunit.</text>
</comment>
<comment type="subunit">
    <text evidence="1">Homodimer.</text>
</comment>
<comment type="similarity">
    <text evidence="3">Belongs to the RusA family.</text>
</comment>
<comment type="sequence caution" evidence="3">
    <conflict type="erroneous initiation">
        <sequence resource="EMBL-CDS" id="AAC07739"/>
    </conflict>
</comment>
<sequence>MISEMEEIELYLSKLPVPKSNRYIRPKGGKVFKPPRVTNWEARAIWELREQFKGDAIDYEISVDITLILPNRRKRDIDNMLKSLWDVMEKAGVIKNDNLIFEVHTVKKIEKGKEGVIIKIRPFQSP</sequence>
<organism>
    <name type="scientific">Aquifex aeolicus (strain VF5)</name>
    <dbReference type="NCBI Taxonomy" id="224324"/>
    <lineage>
        <taxon>Bacteria</taxon>
        <taxon>Pseudomonadati</taxon>
        <taxon>Aquificota</taxon>
        <taxon>Aquificia</taxon>
        <taxon>Aquificales</taxon>
        <taxon>Aquificaceae</taxon>
        <taxon>Aquifex</taxon>
    </lineage>
</organism>
<gene>
    <name type="primary">rusA</name>
    <name type="ordered locus">aq_1953</name>
</gene>
<protein>
    <recommendedName>
        <fullName>Crossover junction endodeoxyribonuclease RusA</fullName>
        <ecNumber>3.1.21.10</ecNumber>
    </recommendedName>
    <alternativeName>
        <fullName>Holliday junction nuclease RusA</fullName>
    </alternativeName>
    <alternativeName>
        <fullName>Holliday junction resolvase</fullName>
    </alternativeName>
</protein>
<proteinExistence type="inferred from homology"/>
<feature type="chain" id="PRO_0000192008" description="Crossover junction endodeoxyribonuclease RusA">
    <location>
        <begin position="1"/>
        <end position="126"/>
    </location>
</feature>
<feature type="binding site" evidence="1">
    <location>
        <position position="76"/>
    </location>
    <ligand>
        <name>Mg(2+)</name>
        <dbReference type="ChEBI" id="CHEBI:18420"/>
    </ligand>
</feature>
<feature type="binding site" evidence="1">
    <location>
        <position position="78"/>
    </location>
    <ligand>
        <name>Mg(2+)</name>
        <dbReference type="ChEBI" id="CHEBI:18420"/>
    </ligand>
</feature>
<feature type="binding site" evidence="1">
    <location>
        <position position="97"/>
    </location>
    <ligand>
        <name>Mg(2+)</name>
        <dbReference type="ChEBI" id="CHEBI:18420"/>
    </ligand>
</feature>
<accession>O67766</accession>
<name>RUSA_AQUAE</name>
<evidence type="ECO:0000250" key="1"/>
<evidence type="ECO:0000269" key="2">
    <source>
    </source>
</evidence>
<evidence type="ECO:0000305" key="3"/>
<keyword id="KW-0227">DNA damage</keyword>
<keyword id="KW-0233">DNA recombination</keyword>
<keyword id="KW-0234">DNA repair</keyword>
<keyword id="KW-0255">Endonuclease</keyword>
<keyword id="KW-0378">Hydrolase</keyword>
<keyword id="KW-0460">Magnesium</keyword>
<keyword id="KW-0479">Metal-binding</keyword>
<keyword id="KW-0540">Nuclease</keyword>
<keyword id="KW-1185">Reference proteome</keyword>
<reference key="1">
    <citation type="journal article" date="1998" name="Nature">
        <title>The complete genome of the hyperthermophilic bacterium Aquifex aeolicus.</title>
        <authorList>
            <person name="Deckert G."/>
            <person name="Warren P.V."/>
            <person name="Gaasterland T."/>
            <person name="Young W.G."/>
            <person name="Lenox A.L."/>
            <person name="Graham D.E."/>
            <person name="Overbeek R."/>
            <person name="Snead M.A."/>
            <person name="Keller M."/>
            <person name="Aujay M."/>
            <person name="Huber R."/>
            <person name="Feldman R.A."/>
            <person name="Short J.M."/>
            <person name="Olsen G.J."/>
            <person name="Swanson R.V."/>
        </authorList>
    </citation>
    <scope>NUCLEOTIDE SEQUENCE [LARGE SCALE GENOMIC DNA]</scope>
    <source>
        <strain>VF5</strain>
    </source>
</reference>
<reference key="2">
    <citation type="journal article" date="2002" name="Mol. Microbiol.">
        <title>RusA proteins from the extreme thermophile Aquifex aeolicus and lactococcal phage r1t resolve Holliday junctions.</title>
        <authorList>
            <person name="Sharples G.J."/>
            <person name="Bolt E.L."/>
            <person name="Lloyd R.G."/>
        </authorList>
    </citation>
    <scope>FUNCTION</scope>
</reference>